<feature type="chain" id="PRO_0000151049" description="UPF0284 protein VNG_1572C">
    <location>
        <begin position="1"/>
        <end position="333"/>
    </location>
</feature>
<dbReference type="EMBL" id="AE004437">
    <property type="protein sequence ID" value="AAG19849.1"/>
    <property type="status" value="ALT_INIT"/>
    <property type="molecule type" value="Genomic_DNA"/>
</dbReference>
<dbReference type="PIR" id="E84310">
    <property type="entry name" value="E84310"/>
</dbReference>
<dbReference type="RefSeq" id="WP_012289355.1">
    <property type="nucleotide sequence ID" value="NC_002607.1"/>
</dbReference>
<dbReference type="SMR" id="Q9HPL8"/>
<dbReference type="STRING" id="64091.VNG_1572C"/>
<dbReference type="PaxDb" id="64091-VNG_1572C"/>
<dbReference type="KEGG" id="hal:VNG_1572C"/>
<dbReference type="PATRIC" id="fig|64091.14.peg.1202"/>
<dbReference type="HOGENOM" id="CLU_053134_0_0_2"/>
<dbReference type="InParanoid" id="Q9HPL8"/>
<dbReference type="OrthoDB" id="9136at2157"/>
<dbReference type="PhylomeDB" id="Q9HPL8"/>
<dbReference type="Proteomes" id="UP000000554">
    <property type="component" value="Chromosome"/>
</dbReference>
<dbReference type="GO" id="GO:0008939">
    <property type="term" value="F:nicotinate-nucleotide-dimethylbenzimidazole phosphoribosyltransferase activity"/>
    <property type="evidence" value="ECO:0007669"/>
    <property type="project" value="InterPro"/>
</dbReference>
<dbReference type="CDD" id="cd02439">
    <property type="entry name" value="DMB-PRT_CobT"/>
    <property type="match status" value="1"/>
</dbReference>
<dbReference type="Gene3D" id="3.40.50.10210">
    <property type="match status" value="1"/>
</dbReference>
<dbReference type="HAMAP" id="MF_01086">
    <property type="entry name" value="UPF0284"/>
    <property type="match status" value="1"/>
</dbReference>
<dbReference type="InterPro" id="IPR003200">
    <property type="entry name" value="Nict_dMeBzImd_PRibTrfase"/>
</dbReference>
<dbReference type="InterPro" id="IPR002805">
    <property type="entry name" value="Nict_dMeBzImd_PRibTrfase_arc"/>
</dbReference>
<dbReference type="InterPro" id="IPR036087">
    <property type="entry name" value="Nict_dMeBzImd_PRibTrfase_sf"/>
</dbReference>
<dbReference type="NCBIfam" id="NF003371">
    <property type="entry name" value="PRK04447.1-4"/>
    <property type="match status" value="1"/>
</dbReference>
<dbReference type="NCBIfam" id="NF003372">
    <property type="entry name" value="PRK04447.1-5"/>
    <property type="match status" value="1"/>
</dbReference>
<dbReference type="PANTHER" id="PTHR38811">
    <property type="match status" value="1"/>
</dbReference>
<dbReference type="PANTHER" id="PTHR38811:SF1">
    <property type="entry name" value="UPF0284 PROTEIN SLL1500"/>
    <property type="match status" value="1"/>
</dbReference>
<dbReference type="SUPFAM" id="SSF52733">
    <property type="entry name" value="Nicotinate mononucleotide:5,6-dimethylbenzimidazole phosphoribosyltransferase (CobT)"/>
    <property type="match status" value="1"/>
</dbReference>
<keyword id="KW-1185">Reference proteome</keyword>
<comment type="similarity">
    <text evidence="1">Belongs to the UPF0284 family.</text>
</comment>
<comment type="sequence caution" evidence="2">
    <conflict type="erroneous initiation">
        <sequence resource="EMBL-CDS" id="AAG19849"/>
    </conflict>
</comment>
<organism>
    <name type="scientific">Halobacterium salinarum (strain ATCC 700922 / JCM 11081 / NRC-1)</name>
    <name type="common">Halobacterium halobium</name>
    <dbReference type="NCBI Taxonomy" id="64091"/>
    <lineage>
        <taxon>Archaea</taxon>
        <taxon>Methanobacteriati</taxon>
        <taxon>Methanobacteriota</taxon>
        <taxon>Stenosarchaea group</taxon>
        <taxon>Halobacteria</taxon>
        <taxon>Halobacteriales</taxon>
        <taxon>Halobacteriaceae</taxon>
        <taxon>Halobacterium</taxon>
        <taxon>Halobacterium salinarum NRC-34001</taxon>
    </lineage>
</organism>
<proteinExistence type="inferred from homology"/>
<reference key="1">
    <citation type="journal article" date="2000" name="Proc. Natl. Acad. Sci. U.S.A.">
        <title>Genome sequence of Halobacterium species NRC-1.</title>
        <authorList>
            <person name="Ng W.V."/>
            <person name="Kennedy S.P."/>
            <person name="Mahairas G.G."/>
            <person name="Berquist B."/>
            <person name="Pan M."/>
            <person name="Shukla H.D."/>
            <person name="Lasky S.R."/>
            <person name="Baliga N.S."/>
            <person name="Thorsson V."/>
            <person name="Sbrogna J."/>
            <person name="Swartzell S."/>
            <person name="Weir D."/>
            <person name="Hall J."/>
            <person name="Dahl T.A."/>
            <person name="Welti R."/>
            <person name="Goo Y.A."/>
            <person name="Leithauser B."/>
            <person name="Keller K."/>
            <person name="Cruz R."/>
            <person name="Danson M.J."/>
            <person name="Hough D.W."/>
            <person name="Maddocks D.G."/>
            <person name="Jablonski P.E."/>
            <person name="Krebs M.P."/>
            <person name="Angevine C.M."/>
            <person name="Dale H."/>
            <person name="Isenbarger T.A."/>
            <person name="Peck R.F."/>
            <person name="Pohlschroder M."/>
            <person name="Spudich J.L."/>
            <person name="Jung K.-H."/>
            <person name="Alam M."/>
            <person name="Freitas T."/>
            <person name="Hou S."/>
            <person name="Daniels C.J."/>
            <person name="Dennis P.P."/>
            <person name="Omer A.D."/>
            <person name="Ebhardt H."/>
            <person name="Lowe T.M."/>
            <person name="Liang P."/>
            <person name="Riley M."/>
            <person name="Hood L."/>
            <person name="DasSarma S."/>
        </authorList>
    </citation>
    <scope>NUCLEOTIDE SEQUENCE [LARGE SCALE GENOMIC DNA]</scope>
    <source>
        <strain>ATCC 700922 / JCM 11081 / NRC-1</strain>
    </source>
</reference>
<evidence type="ECO:0000255" key="1">
    <source>
        <dbReference type="HAMAP-Rule" id="MF_01086"/>
    </source>
</evidence>
<evidence type="ECO:0000305" key="2"/>
<protein>
    <recommendedName>
        <fullName evidence="1">UPF0284 protein VNG_1572C</fullName>
    </recommendedName>
</protein>
<name>Y1572_HALSA</name>
<accession>Q9HPL8</accession>
<gene>
    <name type="ordered locus">VNG_1572C</name>
</gene>
<sequence>MSGTPDTLFALAAGATRTAAIEGISAAGADPALMAHTPSADAELLTYGHTVRAPVVPVSPSGCPTPAVITRAVRELVGFESLVIDAGLAEPTGAPTVTTGISPGADIRDETPVPDAEAAYSAAYEFGHGLHTDELVIAETIPGGTTTAMGVLAALGEPRIVSSSLPNNPVALKERVVDDALAASGLEQGDLAGEPVAAVRQMGDPVLAVVAGLAAGALDAGIDVTLAGGTQLATAGALVRHDGVTEPMTLATTSFVAGDDSAGIDALAADQDLAVTVTDPAFEARESHPAMAAYLDGEAKEGVGMGGALALAAEAGIGMDSVRNAIISVYDRV</sequence>